<organism>
    <name type="scientific">Arabidopsis thaliana</name>
    <name type="common">Mouse-ear cress</name>
    <dbReference type="NCBI Taxonomy" id="3702"/>
    <lineage>
        <taxon>Eukaryota</taxon>
        <taxon>Viridiplantae</taxon>
        <taxon>Streptophyta</taxon>
        <taxon>Embryophyta</taxon>
        <taxon>Tracheophyta</taxon>
        <taxon>Spermatophyta</taxon>
        <taxon>Magnoliopsida</taxon>
        <taxon>eudicotyledons</taxon>
        <taxon>Gunneridae</taxon>
        <taxon>Pentapetalae</taxon>
        <taxon>rosids</taxon>
        <taxon>malvids</taxon>
        <taxon>Brassicales</taxon>
        <taxon>Brassicaceae</taxon>
        <taxon>Camelineae</taxon>
        <taxon>Arabidopsis</taxon>
    </lineage>
</organism>
<name>PP132_ARATH</name>
<dbReference type="EMBL" id="AC007202">
    <property type="protein sequence ID" value="AAD30226.1"/>
    <property type="molecule type" value="Genomic_DNA"/>
</dbReference>
<dbReference type="EMBL" id="CP002684">
    <property type="protein sequence ID" value="AEE36250.1"/>
    <property type="molecule type" value="Genomic_DNA"/>
</dbReference>
<dbReference type="EMBL" id="BX817051">
    <property type="status" value="NOT_ANNOTATED_CDS"/>
    <property type="molecule type" value="mRNA"/>
</dbReference>
<dbReference type="PIR" id="B96826">
    <property type="entry name" value="B96826"/>
</dbReference>
<dbReference type="RefSeq" id="NP_178067.1">
    <property type="nucleotide sequence ID" value="NM_106597.4"/>
</dbReference>
<dbReference type="SMR" id="Q9SAK0"/>
<dbReference type="FunCoup" id="Q9SAK0">
    <property type="interactions" value="1655"/>
</dbReference>
<dbReference type="STRING" id="3702.Q9SAK0"/>
<dbReference type="GlyGen" id="Q9SAK0">
    <property type="glycosylation" value="1 site"/>
</dbReference>
<dbReference type="iPTMnet" id="Q9SAK0"/>
<dbReference type="PaxDb" id="3702-AT1G79490.1"/>
<dbReference type="ProteomicsDB" id="249068"/>
<dbReference type="EnsemblPlants" id="AT1G79490.1">
    <property type="protein sequence ID" value="AT1G79490.1"/>
    <property type="gene ID" value="AT1G79490"/>
</dbReference>
<dbReference type="GeneID" id="844287"/>
<dbReference type="Gramene" id="AT1G79490.1">
    <property type="protein sequence ID" value="AT1G79490.1"/>
    <property type="gene ID" value="AT1G79490"/>
</dbReference>
<dbReference type="KEGG" id="ath:AT1G79490"/>
<dbReference type="Araport" id="AT1G79490"/>
<dbReference type="TAIR" id="AT1G79490">
    <property type="gene designation" value="EMB2217"/>
</dbReference>
<dbReference type="eggNOG" id="KOG4197">
    <property type="taxonomic scope" value="Eukaryota"/>
</dbReference>
<dbReference type="HOGENOM" id="CLU_009972_0_0_1"/>
<dbReference type="InParanoid" id="Q9SAK0"/>
<dbReference type="OMA" id="NMTHITQ"/>
<dbReference type="PhylomeDB" id="Q9SAK0"/>
<dbReference type="PRO" id="PR:Q9SAK0"/>
<dbReference type="Proteomes" id="UP000006548">
    <property type="component" value="Chromosome 1"/>
</dbReference>
<dbReference type="ExpressionAtlas" id="Q9SAK0">
    <property type="expression patterns" value="baseline and differential"/>
</dbReference>
<dbReference type="GO" id="GO:0005739">
    <property type="term" value="C:mitochondrion"/>
    <property type="evidence" value="ECO:0007005"/>
    <property type="project" value="TAIR"/>
</dbReference>
<dbReference type="FunFam" id="1.25.40.10:FF:003121">
    <property type="entry name" value="Pentatricopeptide repeat-containing protein At1g79490, mitochondrial"/>
    <property type="match status" value="1"/>
</dbReference>
<dbReference type="Gene3D" id="1.25.40.10">
    <property type="entry name" value="Tetratricopeptide repeat domain"/>
    <property type="match status" value="4"/>
</dbReference>
<dbReference type="InterPro" id="IPR002885">
    <property type="entry name" value="Pentatricopeptide_rpt"/>
</dbReference>
<dbReference type="InterPro" id="IPR033443">
    <property type="entry name" value="PROP1-like_PPR_dom"/>
</dbReference>
<dbReference type="InterPro" id="IPR002625">
    <property type="entry name" value="Smr_dom"/>
</dbReference>
<dbReference type="InterPro" id="IPR011990">
    <property type="entry name" value="TPR-like_helical_dom_sf"/>
</dbReference>
<dbReference type="NCBIfam" id="TIGR00756">
    <property type="entry name" value="PPR"/>
    <property type="match status" value="6"/>
</dbReference>
<dbReference type="PANTHER" id="PTHR47447">
    <property type="entry name" value="OS03G0856100 PROTEIN"/>
    <property type="match status" value="1"/>
</dbReference>
<dbReference type="PANTHER" id="PTHR47447:SF17">
    <property type="entry name" value="OS12G0638900 PROTEIN"/>
    <property type="match status" value="1"/>
</dbReference>
<dbReference type="Pfam" id="PF13812">
    <property type="entry name" value="PPR_3"/>
    <property type="match status" value="1"/>
</dbReference>
<dbReference type="Pfam" id="PF17177">
    <property type="entry name" value="PPR_long"/>
    <property type="match status" value="1"/>
</dbReference>
<dbReference type="SMART" id="SM00463">
    <property type="entry name" value="SMR"/>
    <property type="match status" value="1"/>
</dbReference>
<dbReference type="PROSITE" id="PS51375">
    <property type="entry name" value="PPR"/>
    <property type="match status" value="12"/>
</dbReference>
<dbReference type="PROSITE" id="PS50828">
    <property type="entry name" value="SMR"/>
    <property type="match status" value="1"/>
</dbReference>
<sequence length="836" mass="94172">MIRGRTAKVIPRNVIFTLSRSSISESPLISPSRINPKLAGSFSFNIRLLSYFTVRNGFCPDCSVPRDPNFVGLTTQCRSIVRRFCSEKIGSSESSGWTEEVEYLDESGSVLHSGKGIRSVEPGLDDHVMVGGLKKPYMNASSVAKIVEVVQRWKWGPELETQLDKLQFVPNMVHITQSLKIVKEVDAALSLFRWAKKQPWYLPSDECYVVLFDGLNQGRDFVGIQSLFEEMVQDSSSHGDLSFNAYNQVIQYLAKAEKLEVAFCCFKKAQESGCKIDTQTYNNLMMLFLNKGLPYKAFEIYESMEKTDSLLDGSTYELIIPSLAKSGRLDAAFKLFQQMKERKLRPSFSVFSSLVDSMGKAGRLDTSMKVYMEMQGFGHRPSATMFVSLIDSYAKAGKLDTALRLWDEMKKSGFRPNFGLYTMIIESHAKSGKLEVAMTVFKDMEKAGFLPTPSTYSCLLEMHAGSGQVDSAMKIYNSMTNAGLRPGLSSYISLLTLLANKRLVDVAGKILLEMKAMGYSVDVCASDVLMIYIKDASVDLALKWLRFMGSSGIKTNNFIIRQLFESCMKNGLYDSARPLLETLVHSAGKVDLVLYTSILAHLVRCQDEDKERQLMSILSATKHKAHAFMCGLFTGPEQRKQPVLTFVREFYQGIDYELEEGAARYFVNVLLNYLVLMGQINRARCVWKVAYENKLFPKAIVFDQHIAWSLDVRNLSVGAALIAVVHTLHRFRKRMLYYGVVPRRIKLVTGPTLKIVIAQMLSSVESPFEVSKVVLRAPGELVMEWFKKPIVQQFLLNEIPSRSDILMHKMNVMFPSSAPELRSMSPPKPLMSSKAF</sequence>
<feature type="transit peptide" description="Mitochondrion" evidence="1">
    <location>
        <begin position="1"/>
        <end position="85"/>
    </location>
</feature>
<feature type="chain" id="PRO_0000342873" description="Pentatricopeptide repeat-containing protein At1g79490, mitochondrial">
    <location>
        <begin position="86"/>
        <end position="836"/>
    </location>
</feature>
<feature type="repeat" description="PPR 1">
    <location>
        <begin position="204"/>
        <end position="238"/>
    </location>
</feature>
<feature type="repeat" description="PPR 2">
    <location>
        <begin position="242"/>
        <end position="276"/>
    </location>
</feature>
<feature type="repeat" description="PPR 3">
    <location>
        <begin position="277"/>
        <end position="311"/>
    </location>
</feature>
<feature type="repeat" description="PPR 4">
    <location>
        <begin position="312"/>
        <end position="346"/>
    </location>
</feature>
<feature type="repeat" description="PPR 5">
    <location>
        <begin position="347"/>
        <end position="381"/>
    </location>
</feature>
<feature type="repeat" description="PPR 6">
    <location>
        <begin position="382"/>
        <end position="416"/>
    </location>
</feature>
<feature type="repeat" description="PPR 7">
    <location>
        <begin position="417"/>
        <end position="451"/>
    </location>
</feature>
<feature type="repeat" description="PPR 8">
    <location>
        <begin position="452"/>
        <end position="486"/>
    </location>
</feature>
<feature type="repeat" description="PPR 9">
    <location>
        <begin position="487"/>
        <end position="521"/>
    </location>
</feature>
<feature type="repeat" description="PPR 10">
    <location>
        <begin position="528"/>
        <end position="555"/>
    </location>
</feature>
<feature type="repeat" description="PPR 11">
    <location>
        <begin position="556"/>
        <end position="590"/>
    </location>
</feature>
<feature type="repeat" description="PPR 12">
    <location>
        <begin position="591"/>
        <end position="625"/>
    </location>
</feature>
<feature type="domain" description="Smr" evidence="2">
    <location>
        <begin position="710"/>
        <end position="786"/>
    </location>
</feature>
<feature type="sequence conflict" description="In Ref. 3; BX817051." evidence="3" ref="3">
    <original>T</original>
    <variation>K</variation>
    <location>
        <position position="582"/>
    </location>
</feature>
<reference key="1">
    <citation type="journal article" date="2000" name="Nature">
        <title>Sequence and analysis of chromosome 1 of the plant Arabidopsis thaliana.</title>
        <authorList>
            <person name="Theologis A."/>
            <person name="Ecker J.R."/>
            <person name="Palm C.J."/>
            <person name="Federspiel N.A."/>
            <person name="Kaul S."/>
            <person name="White O."/>
            <person name="Alonso J."/>
            <person name="Altafi H."/>
            <person name="Araujo R."/>
            <person name="Bowman C.L."/>
            <person name="Brooks S.Y."/>
            <person name="Buehler E."/>
            <person name="Chan A."/>
            <person name="Chao Q."/>
            <person name="Chen H."/>
            <person name="Cheuk R.F."/>
            <person name="Chin C.W."/>
            <person name="Chung M.K."/>
            <person name="Conn L."/>
            <person name="Conway A.B."/>
            <person name="Conway A.R."/>
            <person name="Creasy T.H."/>
            <person name="Dewar K."/>
            <person name="Dunn P."/>
            <person name="Etgu P."/>
            <person name="Feldblyum T.V."/>
            <person name="Feng J.-D."/>
            <person name="Fong B."/>
            <person name="Fujii C.Y."/>
            <person name="Gill J.E."/>
            <person name="Goldsmith A.D."/>
            <person name="Haas B."/>
            <person name="Hansen N.F."/>
            <person name="Hughes B."/>
            <person name="Huizar L."/>
            <person name="Hunter J.L."/>
            <person name="Jenkins J."/>
            <person name="Johnson-Hopson C."/>
            <person name="Khan S."/>
            <person name="Khaykin E."/>
            <person name="Kim C.J."/>
            <person name="Koo H.L."/>
            <person name="Kremenetskaia I."/>
            <person name="Kurtz D.B."/>
            <person name="Kwan A."/>
            <person name="Lam B."/>
            <person name="Langin-Hooper S."/>
            <person name="Lee A."/>
            <person name="Lee J.M."/>
            <person name="Lenz C.A."/>
            <person name="Li J.H."/>
            <person name="Li Y.-P."/>
            <person name="Lin X."/>
            <person name="Liu S.X."/>
            <person name="Liu Z.A."/>
            <person name="Luros J.S."/>
            <person name="Maiti R."/>
            <person name="Marziali A."/>
            <person name="Militscher J."/>
            <person name="Miranda M."/>
            <person name="Nguyen M."/>
            <person name="Nierman W.C."/>
            <person name="Osborne B.I."/>
            <person name="Pai G."/>
            <person name="Peterson J."/>
            <person name="Pham P.K."/>
            <person name="Rizzo M."/>
            <person name="Rooney T."/>
            <person name="Rowley D."/>
            <person name="Sakano H."/>
            <person name="Salzberg S.L."/>
            <person name="Schwartz J.R."/>
            <person name="Shinn P."/>
            <person name="Southwick A.M."/>
            <person name="Sun H."/>
            <person name="Tallon L.J."/>
            <person name="Tambunga G."/>
            <person name="Toriumi M.J."/>
            <person name="Town C.D."/>
            <person name="Utterback T."/>
            <person name="Van Aken S."/>
            <person name="Vaysberg M."/>
            <person name="Vysotskaia V.S."/>
            <person name="Walker M."/>
            <person name="Wu D."/>
            <person name="Yu G."/>
            <person name="Fraser C.M."/>
            <person name="Venter J.C."/>
            <person name="Davis R.W."/>
        </authorList>
    </citation>
    <scope>NUCLEOTIDE SEQUENCE [LARGE SCALE GENOMIC DNA]</scope>
    <source>
        <strain>cv. Columbia</strain>
    </source>
</reference>
<reference key="2">
    <citation type="journal article" date="2017" name="Plant J.">
        <title>Araport11: a complete reannotation of the Arabidopsis thaliana reference genome.</title>
        <authorList>
            <person name="Cheng C.Y."/>
            <person name="Krishnakumar V."/>
            <person name="Chan A.P."/>
            <person name="Thibaud-Nissen F."/>
            <person name="Schobel S."/>
            <person name="Town C.D."/>
        </authorList>
    </citation>
    <scope>GENOME REANNOTATION</scope>
    <source>
        <strain>cv. Columbia</strain>
    </source>
</reference>
<reference key="3">
    <citation type="journal article" date="2004" name="Genome Res.">
        <title>Whole genome sequence comparisons and 'full-length' cDNA sequences: a combined approach to evaluate and improve Arabidopsis genome annotation.</title>
        <authorList>
            <person name="Castelli V."/>
            <person name="Aury J.-M."/>
            <person name="Jaillon O."/>
            <person name="Wincker P."/>
            <person name="Clepet C."/>
            <person name="Menard M."/>
            <person name="Cruaud C."/>
            <person name="Quetier F."/>
            <person name="Scarpelli C."/>
            <person name="Schaechter V."/>
            <person name="Temple G."/>
            <person name="Caboche M."/>
            <person name="Weissenbach J."/>
            <person name="Salanoubat M."/>
        </authorList>
    </citation>
    <scope>NUCLEOTIDE SEQUENCE [LARGE SCALE MRNA]</scope>
    <source>
        <strain>cv. Columbia</strain>
    </source>
</reference>
<reference key="4">
    <citation type="journal article" date="2004" name="Plant Cell">
        <title>Genome-wide analysis of Arabidopsis pentatricopeptide repeat proteins reveals their essential role in organelle biogenesis.</title>
        <authorList>
            <person name="Lurin C."/>
            <person name="Andres C."/>
            <person name="Aubourg S."/>
            <person name="Bellaoui M."/>
            <person name="Bitton F."/>
            <person name="Bruyere C."/>
            <person name="Caboche M."/>
            <person name="Debast C."/>
            <person name="Gualberto J."/>
            <person name="Hoffmann B."/>
            <person name="Lecharny A."/>
            <person name="Le Ret M."/>
            <person name="Martin-Magniette M.-L."/>
            <person name="Mireau H."/>
            <person name="Peeters N."/>
            <person name="Renou J.-P."/>
            <person name="Szurek B."/>
            <person name="Taconnat L."/>
            <person name="Small I."/>
        </authorList>
    </citation>
    <scope>GENE FAMILY</scope>
</reference>
<protein>
    <recommendedName>
        <fullName>Pentatricopeptide repeat-containing protein At1g79490, mitochondrial</fullName>
    </recommendedName>
    <alternativeName>
        <fullName>Protein EMBRYO DEFECTIVE 2217</fullName>
    </alternativeName>
</protein>
<keyword id="KW-0496">Mitochondrion</keyword>
<keyword id="KW-1185">Reference proteome</keyword>
<keyword id="KW-0677">Repeat</keyword>
<keyword id="KW-0809">Transit peptide</keyword>
<evidence type="ECO:0000255" key="1"/>
<evidence type="ECO:0000255" key="2">
    <source>
        <dbReference type="PROSITE-ProRule" id="PRU00321"/>
    </source>
</evidence>
<evidence type="ECO:0000305" key="3"/>
<accession>Q9SAK0</accession>
<gene>
    <name type="primary">EMB2217</name>
    <name type="ordered locus">At1g79490</name>
    <name type="ORF">T8K14.9</name>
</gene>
<comment type="subcellular location">
    <subcellularLocation>
        <location evidence="3">Mitochondrion</location>
    </subcellularLocation>
</comment>
<comment type="similarity">
    <text evidence="3">Belongs to the PPR family. P subfamily.</text>
</comment>
<comment type="sequence caution" evidence="3">
    <conflict type="frameshift">
        <sequence resource="EMBL" id="BX817051"/>
    </conflict>
</comment>
<comment type="online information" name="Pentatricopeptide repeat proteins">
    <link uri="https://ppr.plantenergy.uwa.edu.au"/>
</comment>
<proteinExistence type="evidence at transcript level"/>